<comment type="function">
    <text evidence="1">Catalyzes the attachment of alanine to tRNA(Ala) in a two-step reaction: alanine is first activated by ATP to form Ala-AMP and then transferred to the acceptor end of tRNA(Ala). Also edits incorrectly charged Ser-tRNA(Ala) and Gly-tRNA(Ala) via its editing domain.</text>
</comment>
<comment type="catalytic activity">
    <reaction evidence="1">
        <text>tRNA(Ala) + L-alanine + ATP = L-alanyl-tRNA(Ala) + AMP + diphosphate</text>
        <dbReference type="Rhea" id="RHEA:12540"/>
        <dbReference type="Rhea" id="RHEA-COMP:9657"/>
        <dbReference type="Rhea" id="RHEA-COMP:9923"/>
        <dbReference type="ChEBI" id="CHEBI:30616"/>
        <dbReference type="ChEBI" id="CHEBI:33019"/>
        <dbReference type="ChEBI" id="CHEBI:57972"/>
        <dbReference type="ChEBI" id="CHEBI:78442"/>
        <dbReference type="ChEBI" id="CHEBI:78497"/>
        <dbReference type="ChEBI" id="CHEBI:456215"/>
        <dbReference type="EC" id="6.1.1.7"/>
    </reaction>
</comment>
<comment type="cofactor">
    <cofactor evidence="1">
        <name>Zn(2+)</name>
        <dbReference type="ChEBI" id="CHEBI:29105"/>
    </cofactor>
    <text evidence="1">Binds 1 zinc ion per subunit.</text>
</comment>
<comment type="subcellular location">
    <subcellularLocation>
        <location evidence="1">Cytoplasm</location>
    </subcellularLocation>
</comment>
<comment type="domain">
    <text evidence="1">Consists of three domains; the N-terminal catalytic domain, the editing domain and the C-terminal C-Ala domain. The editing domain removes incorrectly charged amino acids, while the C-Ala domain, along with tRNA(Ala), serves as a bridge to cooperatively bring together the editing and aminoacylation centers thus stimulating deacylation of misacylated tRNAs.</text>
</comment>
<comment type="similarity">
    <text evidence="1">Belongs to the class-II aminoacyl-tRNA synthetase family.</text>
</comment>
<dbReference type="EC" id="6.1.1.7" evidence="1"/>
<dbReference type="EMBL" id="CU459141">
    <property type="protein sequence ID" value="CAM87432.1"/>
    <property type="molecule type" value="Genomic_DNA"/>
</dbReference>
<dbReference type="RefSeq" id="WP_000199457.1">
    <property type="nucleotide sequence ID" value="NZ_JBDGFB010000007.1"/>
</dbReference>
<dbReference type="SMR" id="B0VAI3"/>
<dbReference type="EnsemblBacteria" id="CAM87432">
    <property type="protein sequence ID" value="CAM87432"/>
    <property type="gene ID" value="ABAYE2595"/>
</dbReference>
<dbReference type="KEGG" id="aby:ABAYE2595"/>
<dbReference type="HOGENOM" id="CLU_004485_1_1_6"/>
<dbReference type="GO" id="GO:0005829">
    <property type="term" value="C:cytosol"/>
    <property type="evidence" value="ECO:0007669"/>
    <property type="project" value="TreeGrafter"/>
</dbReference>
<dbReference type="GO" id="GO:0004813">
    <property type="term" value="F:alanine-tRNA ligase activity"/>
    <property type="evidence" value="ECO:0007669"/>
    <property type="project" value="UniProtKB-UniRule"/>
</dbReference>
<dbReference type="GO" id="GO:0002161">
    <property type="term" value="F:aminoacyl-tRNA deacylase activity"/>
    <property type="evidence" value="ECO:0007669"/>
    <property type="project" value="TreeGrafter"/>
</dbReference>
<dbReference type="GO" id="GO:0005524">
    <property type="term" value="F:ATP binding"/>
    <property type="evidence" value="ECO:0007669"/>
    <property type="project" value="UniProtKB-UniRule"/>
</dbReference>
<dbReference type="GO" id="GO:0000049">
    <property type="term" value="F:tRNA binding"/>
    <property type="evidence" value="ECO:0007669"/>
    <property type="project" value="UniProtKB-KW"/>
</dbReference>
<dbReference type="GO" id="GO:0008270">
    <property type="term" value="F:zinc ion binding"/>
    <property type="evidence" value="ECO:0007669"/>
    <property type="project" value="UniProtKB-UniRule"/>
</dbReference>
<dbReference type="GO" id="GO:0006419">
    <property type="term" value="P:alanyl-tRNA aminoacylation"/>
    <property type="evidence" value="ECO:0007669"/>
    <property type="project" value="UniProtKB-UniRule"/>
</dbReference>
<dbReference type="GO" id="GO:0045892">
    <property type="term" value="P:negative regulation of DNA-templated transcription"/>
    <property type="evidence" value="ECO:0007669"/>
    <property type="project" value="TreeGrafter"/>
</dbReference>
<dbReference type="CDD" id="cd00673">
    <property type="entry name" value="AlaRS_core"/>
    <property type="match status" value="1"/>
</dbReference>
<dbReference type="FunFam" id="2.40.30.130:FF:000001">
    <property type="entry name" value="Alanine--tRNA ligase"/>
    <property type="match status" value="1"/>
</dbReference>
<dbReference type="FunFam" id="3.10.310.40:FF:000001">
    <property type="entry name" value="Alanine--tRNA ligase"/>
    <property type="match status" value="1"/>
</dbReference>
<dbReference type="FunFam" id="3.30.54.20:FF:000001">
    <property type="entry name" value="Alanine--tRNA ligase"/>
    <property type="match status" value="1"/>
</dbReference>
<dbReference type="FunFam" id="3.30.930.10:FF:000004">
    <property type="entry name" value="Alanine--tRNA ligase"/>
    <property type="match status" value="1"/>
</dbReference>
<dbReference type="FunFam" id="3.30.980.10:FF:000004">
    <property type="entry name" value="Alanine--tRNA ligase, cytoplasmic"/>
    <property type="match status" value="1"/>
</dbReference>
<dbReference type="Gene3D" id="2.40.30.130">
    <property type="match status" value="1"/>
</dbReference>
<dbReference type="Gene3D" id="3.10.310.40">
    <property type="match status" value="1"/>
</dbReference>
<dbReference type="Gene3D" id="3.30.54.20">
    <property type="match status" value="1"/>
</dbReference>
<dbReference type="Gene3D" id="6.10.250.550">
    <property type="match status" value="1"/>
</dbReference>
<dbReference type="Gene3D" id="3.30.930.10">
    <property type="entry name" value="Bira Bifunctional Protein, Domain 2"/>
    <property type="match status" value="1"/>
</dbReference>
<dbReference type="Gene3D" id="3.30.980.10">
    <property type="entry name" value="Threonyl-trna Synthetase, Chain A, domain 2"/>
    <property type="match status" value="1"/>
</dbReference>
<dbReference type="HAMAP" id="MF_00036_B">
    <property type="entry name" value="Ala_tRNA_synth_B"/>
    <property type="match status" value="1"/>
</dbReference>
<dbReference type="InterPro" id="IPR045864">
    <property type="entry name" value="aa-tRNA-synth_II/BPL/LPL"/>
</dbReference>
<dbReference type="InterPro" id="IPR002318">
    <property type="entry name" value="Ala-tRNA-lgiase_IIc"/>
</dbReference>
<dbReference type="InterPro" id="IPR018162">
    <property type="entry name" value="Ala-tRNA-ligase_IIc_anticod-bd"/>
</dbReference>
<dbReference type="InterPro" id="IPR018165">
    <property type="entry name" value="Ala-tRNA-synth_IIc_core"/>
</dbReference>
<dbReference type="InterPro" id="IPR018164">
    <property type="entry name" value="Ala-tRNA-synth_IIc_N"/>
</dbReference>
<dbReference type="InterPro" id="IPR050058">
    <property type="entry name" value="Ala-tRNA_ligase"/>
</dbReference>
<dbReference type="InterPro" id="IPR023033">
    <property type="entry name" value="Ala_tRNA_ligase_euk/bac"/>
</dbReference>
<dbReference type="InterPro" id="IPR003156">
    <property type="entry name" value="DHHA1_dom"/>
</dbReference>
<dbReference type="InterPro" id="IPR018163">
    <property type="entry name" value="Thr/Ala-tRNA-synth_IIc_edit"/>
</dbReference>
<dbReference type="InterPro" id="IPR009000">
    <property type="entry name" value="Transl_B-barrel_sf"/>
</dbReference>
<dbReference type="InterPro" id="IPR012947">
    <property type="entry name" value="tRNA_SAD"/>
</dbReference>
<dbReference type="NCBIfam" id="TIGR00344">
    <property type="entry name" value="alaS"/>
    <property type="match status" value="1"/>
</dbReference>
<dbReference type="PANTHER" id="PTHR11777:SF9">
    <property type="entry name" value="ALANINE--TRNA LIGASE, CYTOPLASMIC"/>
    <property type="match status" value="1"/>
</dbReference>
<dbReference type="PANTHER" id="PTHR11777">
    <property type="entry name" value="ALANYL-TRNA SYNTHETASE"/>
    <property type="match status" value="1"/>
</dbReference>
<dbReference type="Pfam" id="PF02272">
    <property type="entry name" value="DHHA1"/>
    <property type="match status" value="1"/>
</dbReference>
<dbReference type="Pfam" id="PF01411">
    <property type="entry name" value="tRNA-synt_2c"/>
    <property type="match status" value="1"/>
</dbReference>
<dbReference type="Pfam" id="PF07973">
    <property type="entry name" value="tRNA_SAD"/>
    <property type="match status" value="1"/>
</dbReference>
<dbReference type="PRINTS" id="PR00980">
    <property type="entry name" value="TRNASYNTHALA"/>
</dbReference>
<dbReference type="SMART" id="SM00863">
    <property type="entry name" value="tRNA_SAD"/>
    <property type="match status" value="1"/>
</dbReference>
<dbReference type="SUPFAM" id="SSF55681">
    <property type="entry name" value="Class II aaRS and biotin synthetases"/>
    <property type="match status" value="1"/>
</dbReference>
<dbReference type="SUPFAM" id="SSF101353">
    <property type="entry name" value="Putative anticodon-binding domain of alanyl-tRNA synthetase (AlaRS)"/>
    <property type="match status" value="1"/>
</dbReference>
<dbReference type="SUPFAM" id="SSF55186">
    <property type="entry name" value="ThrRS/AlaRS common domain"/>
    <property type="match status" value="1"/>
</dbReference>
<dbReference type="SUPFAM" id="SSF50447">
    <property type="entry name" value="Translation proteins"/>
    <property type="match status" value="1"/>
</dbReference>
<dbReference type="PROSITE" id="PS50860">
    <property type="entry name" value="AA_TRNA_LIGASE_II_ALA"/>
    <property type="match status" value="1"/>
</dbReference>
<protein>
    <recommendedName>
        <fullName evidence="1">Alanine--tRNA ligase</fullName>
        <ecNumber evidence="1">6.1.1.7</ecNumber>
    </recommendedName>
    <alternativeName>
        <fullName evidence="1">Alanyl-tRNA synthetase</fullName>
        <shortName evidence="1">AlaRS</shortName>
    </alternativeName>
</protein>
<gene>
    <name evidence="1" type="primary">alaS</name>
    <name type="ordered locus">ABAYE2595</name>
</gene>
<evidence type="ECO:0000255" key="1">
    <source>
        <dbReference type="HAMAP-Rule" id="MF_00036"/>
    </source>
</evidence>
<feature type="chain" id="PRO_0000347475" description="Alanine--tRNA ligase">
    <location>
        <begin position="1"/>
        <end position="878"/>
    </location>
</feature>
<feature type="binding site" evidence="1">
    <location>
        <position position="562"/>
    </location>
    <ligand>
        <name>Zn(2+)</name>
        <dbReference type="ChEBI" id="CHEBI:29105"/>
    </ligand>
</feature>
<feature type="binding site" evidence="1">
    <location>
        <position position="566"/>
    </location>
    <ligand>
        <name>Zn(2+)</name>
        <dbReference type="ChEBI" id="CHEBI:29105"/>
    </ligand>
</feature>
<feature type="binding site" evidence="1">
    <location>
        <position position="670"/>
    </location>
    <ligand>
        <name>Zn(2+)</name>
        <dbReference type="ChEBI" id="CHEBI:29105"/>
    </ligand>
</feature>
<feature type="binding site" evidence="1">
    <location>
        <position position="674"/>
    </location>
    <ligand>
        <name>Zn(2+)</name>
        <dbReference type="ChEBI" id="CHEBI:29105"/>
    </ligand>
</feature>
<organism>
    <name type="scientific">Acinetobacter baumannii (strain AYE)</name>
    <dbReference type="NCBI Taxonomy" id="509173"/>
    <lineage>
        <taxon>Bacteria</taxon>
        <taxon>Pseudomonadati</taxon>
        <taxon>Pseudomonadota</taxon>
        <taxon>Gammaproteobacteria</taxon>
        <taxon>Moraxellales</taxon>
        <taxon>Moraxellaceae</taxon>
        <taxon>Acinetobacter</taxon>
        <taxon>Acinetobacter calcoaceticus/baumannii complex</taxon>
    </lineage>
</organism>
<reference key="1">
    <citation type="journal article" date="2008" name="PLoS ONE">
        <title>Comparative analysis of Acinetobacters: three genomes for three lifestyles.</title>
        <authorList>
            <person name="Vallenet D."/>
            <person name="Nordmann P."/>
            <person name="Barbe V."/>
            <person name="Poirel L."/>
            <person name="Mangenot S."/>
            <person name="Bataille E."/>
            <person name="Dossat C."/>
            <person name="Gas S."/>
            <person name="Kreimeyer A."/>
            <person name="Lenoble P."/>
            <person name="Oztas S."/>
            <person name="Poulain J."/>
            <person name="Segurens B."/>
            <person name="Robert C."/>
            <person name="Abergel C."/>
            <person name="Claverie J.-M."/>
            <person name="Raoult D."/>
            <person name="Medigue C."/>
            <person name="Weissenbach J."/>
            <person name="Cruveiller S."/>
        </authorList>
    </citation>
    <scope>NUCLEOTIDE SEQUENCE [LARGE SCALE GENOMIC DNA]</scope>
    <source>
        <strain>AYE</strain>
    </source>
</reference>
<accession>B0VAI3</accession>
<sequence>MTSAEIREAFLRYFETQGHTRVASSSLVPANDPTLLFTNAGMNQFKDCFLGLEKRDYVRATTSQKCVRAGGKHNDLDNVGYTARHHTFFEMLGNFSFGDYFKRDALKFAWEFLTSEQWLALPKDKLYVTVYHTDDEAYDIWNKEIGLAPERIIRIGDNKGEKYASDNFWAMGDTGPCGPCSEIFFDHGEHIWGGLPGSPEEDGDRFIEIWNNVFMQFNRTADGVLHPLPAPSVDTGMGLERISAVLQHVNSNYDIDLFQHLLKAAANIIGIEDEGQPSLRVVADHARSCCFLIADGVNPSNEGRGYVLRRIIRRAVRHGNKLGATGTFFYKMLQPLIEVMGQAYPELEARREVIEATLIREEEQFAKTLEQGLKLLEGELAQLKDKTIPGATVFKLYDTYGFPTDLTADIARERGFIIDEAGFEVEMAAQRQRARDAGKFAVDYNNIVKVEGETQFDGYTNTTGQGQIVAIYKDGVQVDEVSEGDEALIVLNQTPFYAESGGQIGDTGIFKNETGIFEVQDTKKSGGAFVHQGIVTVGNLKTSQNVEAIVKADIREATARNHSATHLLHAALRQILGSHVQQKGSLVASDILRFDFANDQPVSFEQLQQVERLVNAEIIANTAVTTELLDIETAKAKGAMMLFGEKYGDEVRVLSMGSVIDEKNFSIELCGGIHVKRTGDIGLFKITSEGGVAAGVRRIEAVTGTKALEVVQKADHDIQHINSLLKAQKDQTVERVQANVELVSALQKQIEQLNQKLANFQAADLIDQVQTIAGRQTLITTVQGVDAKALRNLHDSVKSKLENAVIVLAGVEGDKVSLLASVASQYTANLKAGDIIKHLATELGGKGGGKPDLAQGGAPLNEKFGQVMAALPAWLEQK</sequence>
<proteinExistence type="inferred from homology"/>
<name>SYA_ACIBY</name>
<keyword id="KW-0030">Aminoacyl-tRNA synthetase</keyword>
<keyword id="KW-0067">ATP-binding</keyword>
<keyword id="KW-0963">Cytoplasm</keyword>
<keyword id="KW-0436">Ligase</keyword>
<keyword id="KW-0479">Metal-binding</keyword>
<keyword id="KW-0547">Nucleotide-binding</keyword>
<keyword id="KW-0648">Protein biosynthesis</keyword>
<keyword id="KW-0694">RNA-binding</keyword>
<keyword id="KW-0820">tRNA-binding</keyword>
<keyword id="KW-0862">Zinc</keyword>